<sequence length="83" mass="9735">MGFVDMDYDIISYSDQMPLAQHYSYFIIYSPSKSRFHVIPYKDDEYLNRFYWLQISLGFSIDASNISSQYSANPTINLSLILD</sequence>
<protein>
    <recommendedName>
        <fullName>Uncharacterized 9.7 kDa protein in chlB-trnK intergenic region</fullName>
    </recommendedName>
    <alternativeName>
        <fullName>ORF 83</fullName>
    </alternativeName>
</protein>
<accession>Q00865</accession>
<keyword id="KW-0150">Chloroplast</keyword>
<keyword id="KW-0934">Plastid</keyword>
<feature type="chain" id="PRO_0000217523" description="Uncharacterized 9.7 kDa protein in chlB-trnK intergenic region">
    <location>
        <begin position="1"/>
        <end position="83"/>
    </location>
</feature>
<comment type="subcellular location">
    <subcellularLocation>
        <location>Plastid</location>
        <location>Chloroplast</location>
    </subcellularLocation>
</comment>
<proteinExistence type="predicted"/>
<name>YCX1_PINTH</name>
<reference key="1">
    <citation type="journal article" date="1992" name="Mol. Gen. Genet.">
        <title>Chloroplast DNA of black pine retains a residual inverted repeat lacking rRNA genes: nucleotide sequences of trnQ, trnK, psbA, trnI and trnH and the absence of rps16.</title>
        <authorList>
            <person name="Tsudzuki J."/>
            <person name="Nakashima K."/>
            <person name="Tsudzuki T."/>
            <person name="Hiratsuka J."/>
            <person name="Shibata M."/>
            <person name="Wakasugi T."/>
            <person name="Sugiura M."/>
        </authorList>
    </citation>
    <scope>NUCLEOTIDE SEQUENCE [GENOMIC DNA]</scope>
</reference>
<reference key="2">
    <citation type="journal article" date="1994" name="Proc. Natl. Acad. Sci. U.S.A.">
        <title>Loss of all ndh genes as determined by sequencing the entire chloroplast genome of the black pine Pinus thunbergii.</title>
        <authorList>
            <person name="Wakasugi T."/>
            <person name="Tsudzuki J."/>
            <person name="Ito S."/>
            <person name="Nakashima K."/>
            <person name="Tsudzuki T."/>
            <person name="Sugiura M."/>
        </authorList>
    </citation>
    <scope>NUCLEOTIDE SEQUENCE [LARGE SCALE GENOMIC DNA]</scope>
</reference>
<organism>
    <name type="scientific">Pinus thunbergii</name>
    <name type="common">Japanese black pine</name>
    <name type="synonym">Pinus thunbergiana</name>
    <dbReference type="NCBI Taxonomy" id="3350"/>
    <lineage>
        <taxon>Eukaryota</taxon>
        <taxon>Viridiplantae</taxon>
        <taxon>Streptophyta</taxon>
        <taxon>Embryophyta</taxon>
        <taxon>Tracheophyta</taxon>
        <taxon>Spermatophyta</taxon>
        <taxon>Pinopsida</taxon>
        <taxon>Pinidae</taxon>
        <taxon>Conifers I</taxon>
        <taxon>Pinales</taxon>
        <taxon>Pinaceae</taxon>
        <taxon>Pinus</taxon>
        <taxon>Pinus subgen. Pinus</taxon>
    </lineage>
</organism>
<dbReference type="EMBL" id="D11467">
    <property type="protein sequence ID" value="BAA02021.1"/>
    <property type="molecule type" value="Genomic_DNA"/>
</dbReference>
<dbReference type="EMBL" id="D17510">
    <property type="protein sequence ID" value="BAA04309.1"/>
    <property type="molecule type" value="Genomic_DNA"/>
</dbReference>
<dbReference type="PIR" id="S29325">
    <property type="entry name" value="S29325"/>
</dbReference>
<dbReference type="RefSeq" id="NP_042350.1">
    <property type="nucleotide sequence ID" value="NC_001631.1"/>
</dbReference>
<dbReference type="GeneID" id="1457629"/>
<dbReference type="GO" id="GO:0009507">
    <property type="term" value="C:chloroplast"/>
    <property type="evidence" value="ECO:0007669"/>
    <property type="project" value="UniProtKB-SubCell"/>
</dbReference>
<geneLocation type="chloroplast"/>